<sequence length="49" mass="5873">MRVNVTLACTECGDRNYITTKNKRNNPERVEMKKFCSRENKQTLHRETK</sequence>
<dbReference type="EMBL" id="CP000730">
    <property type="protein sequence ID" value="ABX29560.1"/>
    <property type="molecule type" value="Genomic_DNA"/>
</dbReference>
<dbReference type="SMR" id="A8Z491"/>
<dbReference type="KEGG" id="sax:USA300HOU_1553"/>
<dbReference type="HOGENOM" id="CLU_190949_0_2_9"/>
<dbReference type="GO" id="GO:0005737">
    <property type="term" value="C:cytoplasm"/>
    <property type="evidence" value="ECO:0007669"/>
    <property type="project" value="UniProtKB-ARBA"/>
</dbReference>
<dbReference type="GO" id="GO:1990904">
    <property type="term" value="C:ribonucleoprotein complex"/>
    <property type="evidence" value="ECO:0007669"/>
    <property type="project" value="UniProtKB-KW"/>
</dbReference>
<dbReference type="GO" id="GO:0005840">
    <property type="term" value="C:ribosome"/>
    <property type="evidence" value="ECO:0007669"/>
    <property type="project" value="UniProtKB-KW"/>
</dbReference>
<dbReference type="GO" id="GO:0003735">
    <property type="term" value="F:structural constituent of ribosome"/>
    <property type="evidence" value="ECO:0007669"/>
    <property type="project" value="InterPro"/>
</dbReference>
<dbReference type="GO" id="GO:0006412">
    <property type="term" value="P:translation"/>
    <property type="evidence" value="ECO:0007669"/>
    <property type="project" value="UniProtKB-UniRule"/>
</dbReference>
<dbReference type="Gene3D" id="2.20.28.120">
    <property type="entry name" value="Ribosomal protein L33"/>
    <property type="match status" value="1"/>
</dbReference>
<dbReference type="HAMAP" id="MF_00294">
    <property type="entry name" value="Ribosomal_bL33"/>
    <property type="match status" value="1"/>
</dbReference>
<dbReference type="InterPro" id="IPR001705">
    <property type="entry name" value="Ribosomal_bL33"/>
</dbReference>
<dbReference type="InterPro" id="IPR018264">
    <property type="entry name" value="Ribosomal_bL33_CS"/>
</dbReference>
<dbReference type="InterPro" id="IPR038584">
    <property type="entry name" value="Ribosomal_bL33_sf"/>
</dbReference>
<dbReference type="InterPro" id="IPR011332">
    <property type="entry name" value="Ribosomal_zn-bd"/>
</dbReference>
<dbReference type="NCBIfam" id="NF001764">
    <property type="entry name" value="PRK00504.1"/>
    <property type="match status" value="1"/>
</dbReference>
<dbReference type="NCBIfam" id="NF001860">
    <property type="entry name" value="PRK00595.1"/>
    <property type="match status" value="1"/>
</dbReference>
<dbReference type="NCBIfam" id="TIGR01023">
    <property type="entry name" value="rpmG_bact"/>
    <property type="match status" value="1"/>
</dbReference>
<dbReference type="PANTHER" id="PTHR43168">
    <property type="entry name" value="50S RIBOSOMAL PROTEIN L33, CHLOROPLASTIC"/>
    <property type="match status" value="1"/>
</dbReference>
<dbReference type="PANTHER" id="PTHR43168:SF2">
    <property type="entry name" value="LARGE RIBOSOMAL SUBUNIT PROTEIN BL33C"/>
    <property type="match status" value="1"/>
</dbReference>
<dbReference type="Pfam" id="PF00471">
    <property type="entry name" value="Ribosomal_L33"/>
    <property type="match status" value="1"/>
</dbReference>
<dbReference type="SUPFAM" id="SSF57829">
    <property type="entry name" value="Zn-binding ribosomal proteins"/>
    <property type="match status" value="1"/>
</dbReference>
<dbReference type="PROSITE" id="PS00582">
    <property type="entry name" value="RIBOSOMAL_L33"/>
    <property type="match status" value="1"/>
</dbReference>
<accession>A8Z491</accession>
<reference key="1">
    <citation type="journal article" date="2007" name="BMC Microbiol.">
        <title>Subtle genetic changes enhance virulence of methicillin resistant and sensitive Staphylococcus aureus.</title>
        <authorList>
            <person name="Highlander S.K."/>
            <person name="Hulten K.G."/>
            <person name="Qin X."/>
            <person name="Jiang H."/>
            <person name="Yerrapragada S."/>
            <person name="Mason E.O. Jr."/>
            <person name="Shang Y."/>
            <person name="Williams T.M."/>
            <person name="Fortunov R.M."/>
            <person name="Liu Y."/>
            <person name="Igboeli O."/>
            <person name="Petrosino J."/>
            <person name="Tirumalai M."/>
            <person name="Uzman A."/>
            <person name="Fox G.E."/>
            <person name="Cardenas A.M."/>
            <person name="Muzny D.M."/>
            <person name="Hemphill L."/>
            <person name="Ding Y."/>
            <person name="Dugan S."/>
            <person name="Blyth P.R."/>
            <person name="Buhay C.J."/>
            <person name="Dinh H.H."/>
            <person name="Hawes A.C."/>
            <person name="Holder M."/>
            <person name="Kovar C.L."/>
            <person name="Lee S.L."/>
            <person name="Liu W."/>
            <person name="Nazareth L.V."/>
            <person name="Wang Q."/>
            <person name="Zhou J."/>
            <person name="Kaplan S.L."/>
            <person name="Weinstock G.M."/>
        </authorList>
    </citation>
    <scope>NUCLEOTIDE SEQUENCE [LARGE SCALE GENOMIC DNA]</scope>
    <source>
        <strain>USA300 / TCH1516</strain>
    </source>
</reference>
<comment type="similarity">
    <text evidence="1">Belongs to the bacterial ribosomal protein bL33 family.</text>
</comment>
<organism>
    <name type="scientific">Staphylococcus aureus (strain USA300 / TCH1516)</name>
    <dbReference type="NCBI Taxonomy" id="451516"/>
    <lineage>
        <taxon>Bacteria</taxon>
        <taxon>Bacillati</taxon>
        <taxon>Bacillota</taxon>
        <taxon>Bacilli</taxon>
        <taxon>Bacillales</taxon>
        <taxon>Staphylococcaceae</taxon>
        <taxon>Staphylococcus</taxon>
    </lineage>
</organism>
<gene>
    <name evidence="1" type="primary">rpmG3</name>
    <name type="ordered locus">USA300HOU_1553</name>
</gene>
<protein>
    <recommendedName>
        <fullName evidence="1">Large ribosomal subunit protein bL33C</fullName>
    </recommendedName>
    <alternativeName>
        <fullName evidence="1">50S ribosomal protein L33 3</fullName>
    </alternativeName>
</protein>
<evidence type="ECO:0000255" key="1">
    <source>
        <dbReference type="HAMAP-Rule" id="MF_00294"/>
    </source>
</evidence>
<keyword id="KW-0687">Ribonucleoprotein</keyword>
<keyword id="KW-0689">Ribosomal protein</keyword>
<name>RL333_STAAT</name>
<feature type="chain" id="PRO_0000356694" description="Large ribosomal subunit protein bL33C">
    <location>
        <begin position="1"/>
        <end position="49"/>
    </location>
</feature>
<proteinExistence type="inferred from homology"/>